<dbReference type="EC" id="2.7.1.5" evidence="1"/>
<dbReference type="EMBL" id="BX950851">
    <property type="protein sequence ID" value="CAG73355.1"/>
    <property type="molecule type" value="Genomic_DNA"/>
</dbReference>
<dbReference type="RefSeq" id="WP_011092062.1">
    <property type="nucleotide sequence ID" value="NC_004547.2"/>
</dbReference>
<dbReference type="SMR" id="Q6DA23"/>
<dbReference type="STRING" id="218491.ECA0440"/>
<dbReference type="KEGG" id="eca:ECA0440"/>
<dbReference type="PATRIC" id="fig|218491.5.peg.444"/>
<dbReference type="eggNOG" id="COG1070">
    <property type="taxonomic scope" value="Bacteria"/>
</dbReference>
<dbReference type="HOGENOM" id="CLU_039395_0_0_6"/>
<dbReference type="OrthoDB" id="9761504at2"/>
<dbReference type="UniPathway" id="UPA00541">
    <property type="reaction ID" value="UER00602"/>
</dbReference>
<dbReference type="Proteomes" id="UP000007966">
    <property type="component" value="Chromosome"/>
</dbReference>
<dbReference type="GO" id="GO:0005829">
    <property type="term" value="C:cytosol"/>
    <property type="evidence" value="ECO:0007669"/>
    <property type="project" value="TreeGrafter"/>
</dbReference>
<dbReference type="GO" id="GO:0005524">
    <property type="term" value="F:ATP binding"/>
    <property type="evidence" value="ECO:0007669"/>
    <property type="project" value="UniProtKB-KW"/>
</dbReference>
<dbReference type="GO" id="GO:0004370">
    <property type="term" value="F:glycerol kinase activity"/>
    <property type="evidence" value="ECO:0007669"/>
    <property type="project" value="TreeGrafter"/>
</dbReference>
<dbReference type="GO" id="GO:0008993">
    <property type="term" value="F:rhamnulokinase activity"/>
    <property type="evidence" value="ECO:0007669"/>
    <property type="project" value="UniProtKB-UniRule"/>
</dbReference>
<dbReference type="GO" id="GO:0006071">
    <property type="term" value="P:glycerol metabolic process"/>
    <property type="evidence" value="ECO:0007669"/>
    <property type="project" value="TreeGrafter"/>
</dbReference>
<dbReference type="GO" id="GO:0019301">
    <property type="term" value="P:rhamnose catabolic process"/>
    <property type="evidence" value="ECO:0007669"/>
    <property type="project" value="UniProtKB-UniRule"/>
</dbReference>
<dbReference type="CDD" id="cd07771">
    <property type="entry name" value="ASKHA_NBD_FGGY_RhaB-like"/>
    <property type="match status" value="1"/>
</dbReference>
<dbReference type="FunFam" id="3.30.420.40:FF:000064">
    <property type="entry name" value="Rhamnulokinase"/>
    <property type="match status" value="1"/>
</dbReference>
<dbReference type="FunFam" id="3.30.420.40:FF:000073">
    <property type="entry name" value="Rhamnulokinase"/>
    <property type="match status" value="1"/>
</dbReference>
<dbReference type="Gene3D" id="3.30.420.40">
    <property type="match status" value="2"/>
</dbReference>
<dbReference type="HAMAP" id="MF_01535">
    <property type="entry name" value="Rhamnulokinase"/>
    <property type="match status" value="1"/>
</dbReference>
<dbReference type="InterPro" id="IPR043129">
    <property type="entry name" value="ATPase_NBD"/>
</dbReference>
<dbReference type="InterPro" id="IPR000577">
    <property type="entry name" value="Carb_kinase_FGGY"/>
</dbReference>
<dbReference type="InterPro" id="IPR018485">
    <property type="entry name" value="FGGY_C"/>
</dbReference>
<dbReference type="InterPro" id="IPR018484">
    <property type="entry name" value="FGGY_N"/>
</dbReference>
<dbReference type="InterPro" id="IPR013449">
    <property type="entry name" value="Rhamnulokinase"/>
</dbReference>
<dbReference type="NCBIfam" id="NF007925">
    <property type="entry name" value="PRK10640.1"/>
    <property type="match status" value="1"/>
</dbReference>
<dbReference type="NCBIfam" id="TIGR02627">
    <property type="entry name" value="rhamnulo_kin"/>
    <property type="match status" value="1"/>
</dbReference>
<dbReference type="PANTHER" id="PTHR10196:SF93">
    <property type="entry name" value="L-RHAMNULOKINASE"/>
    <property type="match status" value="1"/>
</dbReference>
<dbReference type="PANTHER" id="PTHR10196">
    <property type="entry name" value="SUGAR KINASE"/>
    <property type="match status" value="1"/>
</dbReference>
<dbReference type="Pfam" id="PF02782">
    <property type="entry name" value="FGGY_C"/>
    <property type="match status" value="1"/>
</dbReference>
<dbReference type="Pfam" id="PF00370">
    <property type="entry name" value="FGGY_N"/>
    <property type="match status" value="1"/>
</dbReference>
<dbReference type="PIRSF" id="PIRSF000538">
    <property type="entry name" value="GlpK"/>
    <property type="match status" value="1"/>
</dbReference>
<dbReference type="SUPFAM" id="SSF53067">
    <property type="entry name" value="Actin-like ATPase domain"/>
    <property type="match status" value="2"/>
</dbReference>
<gene>
    <name evidence="1" type="primary">rhaB</name>
    <name type="ordered locus">ECA0440</name>
</gene>
<evidence type="ECO:0000255" key="1">
    <source>
        <dbReference type="HAMAP-Rule" id="MF_01535"/>
    </source>
</evidence>
<comment type="function">
    <text evidence="1">Involved in the catabolism of L-rhamnose (6-deoxy-L-mannose). Catalyzes the transfer of the gamma-phosphate group from ATP to the 1-hydroxyl group of L-rhamnulose to yield L-rhamnulose 1-phosphate.</text>
</comment>
<comment type="catalytic activity">
    <reaction evidence="1">
        <text>L-rhamnulose + ATP = L-rhamnulose 1-phosphate + ADP + H(+)</text>
        <dbReference type="Rhea" id="RHEA:20117"/>
        <dbReference type="ChEBI" id="CHEBI:15378"/>
        <dbReference type="ChEBI" id="CHEBI:17897"/>
        <dbReference type="ChEBI" id="CHEBI:30616"/>
        <dbReference type="ChEBI" id="CHEBI:58313"/>
        <dbReference type="ChEBI" id="CHEBI:456216"/>
        <dbReference type="EC" id="2.7.1.5"/>
    </reaction>
</comment>
<comment type="cofactor">
    <cofactor evidence="1">
        <name>Mg(2+)</name>
        <dbReference type="ChEBI" id="CHEBI:18420"/>
    </cofactor>
</comment>
<comment type="pathway">
    <text evidence="1">Carbohydrate degradation; L-rhamnose degradation; glycerone phosphate from L-rhamnose: step 2/3.</text>
</comment>
<comment type="similarity">
    <text evidence="1">Belongs to the rhamnulokinase family.</text>
</comment>
<accession>Q6DA23</accession>
<organism>
    <name type="scientific">Pectobacterium atrosepticum (strain SCRI 1043 / ATCC BAA-672)</name>
    <name type="common">Erwinia carotovora subsp. atroseptica</name>
    <dbReference type="NCBI Taxonomy" id="218491"/>
    <lineage>
        <taxon>Bacteria</taxon>
        <taxon>Pseudomonadati</taxon>
        <taxon>Pseudomonadota</taxon>
        <taxon>Gammaproteobacteria</taxon>
        <taxon>Enterobacterales</taxon>
        <taxon>Pectobacteriaceae</taxon>
        <taxon>Pectobacterium</taxon>
    </lineage>
</organism>
<proteinExistence type="inferred from homology"/>
<feature type="chain" id="PRO_0000090535" description="Rhamnulokinase">
    <location>
        <begin position="1"/>
        <end position="496"/>
    </location>
</feature>
<feature type="active site" description="Proton acceptor" evidence="1">
    <location>
        <position position="237"/>
    </location>
</feature>
<feature type="binding site" evidence="1">
    <location>
        <begin position="13"/>
        <end position="17"/>
    </location>
    <ligand>
        <name>ATP</name>
        <dbReference type="ChEBI" id="CHEBI:30616"/>
    </ligand>
</feature>
<feature type="binding site" evidence="1">
    <location>
        <position position="83"/>
    </location>
    <ligand>
        <name>substrate</name>
    </ligand>
</feature>
<feature type="binding site" evidence="1">
    <location>
        <begin position="236"/>
        <end position="238"/>
    </location>
    <ligand>
        <name>substrate</name>
    </ligand>
</feature>
<feature type="binding site" evidence="1">
    <location>
        <position position="259"/>
    </location>
    <ligand>
        <name>ATP</name>
        <dbReference type="ChEBI" id="CHEBI:30616"/>
    </ligand>
</feature>
<feature type="binding site" evidence="1">
    <location>
        <position position="296"/>
    </location>
    <ligand>
        <name>substrate</name>
    </ligand>
</feature>
<feature type="binding site" evidence="1">
    <location>
        <position position="304"/>
    </location>
    <ligand>
        <name>ATP</name>
        <dbReference type="ChEBI" id="CHEBI:30616"/>
    </ligand>
</feature>
<feature type="binding site" evidence="1">
    <location>
        <position position="402"/>
    </location>
    <ligand>
        <name>ATP</name>
        <dbReference type="ChEBI" id="CHEBI:30616"/>
    </ligand>
</feature>
<feature type="disulfide bond" evidence="1">
    <location>
        <begin position="353"/>
        <end position="370"/>
    </location>
</feature>
<feature type="disulfide bond" evidence="1">
    <location>
        <begin position="413"/>
        <end position="417"/>
    </location>
</feature>
<sequence>MAVKNIVAVDLGASSGRVMLATFHTATQHLTLKEIHRFSNTLVFQDNHHQWDLVALERDILTGLQQIDAMGIAPDSIGVDSWGVDYVLLDKNGQRVGLPYSYRDHRTDGVMAAVTAELGREAIYQHTGIQFLPFNTLYQLKALCDAPPDDLDKVEHLLMIPDYFHYRLTGNLVCEYTNASTTQLLNLEKKTWDGELLDYLGVPRRWLSDPVQPGHAVGNWTAPSGRQIPVTAVATHDTASAVVGAPLQSRDSAYLSSGTWSLMGIESDTPFNSPQALAANITNEGGVDDTYRVLKNIMGLWLLQRVCQERDIKDLGTLIQSATTLPAFVSLINPNDDRFINPPSMHQAIRDYCREHGQPVPQSDAELARCIFDSLALLYRQVVLELGELRHAPIRQLHIVGGGSQNAFLNQLCADVCQIPVLAGPVEASTLGNIGCQLMALGAVTDLAAFRHMLTHNFPLHRYTPRAESDFAGHWRRFQALSQPETAPQGKKETTQ</sequence>
<keyword id="KW-0067">ATP-binding</keyword>
<keyword id="KW-1015">Disulfide bond</keyword>
<keyword id="KW-0418">Kinase</keyword>
<keyword id="KW-0460">Magnesium</keyword>
<keyword id="KW-0547">Nucleotide-binding</keyword>
<keyword id="KW-1185">Reference proteome</keyword>
<keyword id="KW-0684">Rhamnose metabolism</keyword>
<keyword id="KW-0808">Transferase</keyword>
<reference key="1">
    <citation type="journal article" date="2004" name="Proc. Natl. Acad. Sci. U.S.A.">
        <title>Genome sequence of the enterobacterial phytopathogen Erwinia carotovora subsp. atroseptica and characterization of virulence factors.</title>
        <authorList>
            <person name="Bell K.S."/>
            <person name="Sebaihia M."/>
            <person name="Pritchard L."/>
            <person name="Holden M.T.G."/>
            <person name="Hyman L.J."/>
            <person name="Holeva M.C."/>
            <person name="Thomson N.R."/>
            <person name="Bentley S.D."/>
            <person name="Churcher L.J.C."/>
            <person name="Mungall K."/>
            <person name="Atkin R."/>
            <person name="Bason N."/>
            <person name="Brooks K."/>
            <person name="Chillingworth T."/>
            <person name="Clark K."/>
            <person name="Doggett J."/>
            <person name="Fraser A."/>
            <person name="Hance Z."/>
            <person name="Hauser H."/>
            <person name="Jagels K."/>
            <person name="Moule S."/>
            <person name="Norbertczak H."/>
            <person name="Ormond D."/>
            <person name="Price C."/>
            <person name="Quail M.A."/>
            <person name="Sanders M."/>
            <person name="Walker D."/>
            <person name="Whitehead S."/>
            <person name="Salmond G.P.C."/>
            <person name="Birch P.R.J."/>
            <person name="Parkhill J."/>
            <person name="Toth I.K."/>
        </authorList>
    </citation>
    <scope>NUCLEOTIDE SEQUENCE [LARGE SCALE GENOMIC DNA]</scope>
    <source>
        <strain>SCRI 1043 / ATCC BAA-672</strain>
    </source>
</reference>
<protein>
    <recommendedName>
        <fullName evidence="1">Rhamnulokinase</fullName>
        <shortName evidence="1">RhaB</shortName>
        <ecNumber evidence="1">2.7.1.5</ecNumber>
    </recommendedName>
    <alternativeName>
        <fullName evidence="1">ATP:L-rhamnulose phosphotransferase</fullName>
    </alternativeName>
    <alternativeName>
        <fullName evidence="1">L-rhamnulose 1-kinase</fullName>
    </alternativeName>
    <alternativeName>
        <fullName evidence="1">Rhamnulose kinase</fullName>
    </alternativeName>
</protein>
<name>RHAB_PECAS</name>